<gene>
    <name type="primary">pdxK</name>
    <name type="ordered locus">SACOL0626</name>
</gene>
<feature type="chain" id="PRO_0000192027" description="Putative pyridoxine kinase">
    <location>
        <begin position="1"/>
        <end position="276"/>
    </location>
</feature>
<feature type="binding site" evidence="1">
    <location>
        <position position="139"/>
    </location>
    <ligand>
        <name>ATP</name>
        <dbReference type="ChEBI" id="CHEBI:30616"/>
    </ligand>
</feature>
<feature type="binding site" evidence="1">
    <location>
        <position position="142"/>
    </location>
    <ligand>
        <name>Mg(2+)</name>
        <dbReference type="ChEBI" id="CHEBI:18420"/>
    </ligand>
</feature>
<feature type="binding site" evidence="1">
    <location>
        <begin position="176"/>
        <end position="180"/>
    </location>
    <ligand>
        <name>ATP</name>
        <dbReference type="ChEBI" id="CHEBI:30616"/>
    </ligand>
</feature>
<feature type="binding site" evidence="1">
    <location>
        <position position="188"/>
    </location>
    <ligand>
        <name>ATP</name>
        <dbReference type="ChEBI" id="CHEBI:30616"/>
    </ligand>
</feature>
<feature type="binding site" evidence="1">
    <location>
        <position position="213"/>
    </location>
    <ligand>
        <name>ATP</name>
        <dbReference type="ChEBI" id="CHEBI:30616"/>
    </ligand>
</feature>
<feature type="binding site" evidence="1">
    <location>
        <position position="238"/>
    </location>
    <ligand>
        <name>ATP</name>
        <dbReference type="ChEBI" id="CHEBI:30616"/>
    </ligand>
</feature>
<organism>
    <name type="scientific">Staphylococcus aureus (strain COL)</name>
    <dbReference type="NCBI Taxonomy" id="93062"/>
    <lineage>
        <taxon>Bacteria</taxon>
        <taxon>Bacillati</taxon>
        <taxon>Bacillota</taxon>
        <taxon>Bacilli</taxon>
        <taxon>Bacillales</taxon>
        <taxon>Staphylococcaceae</taxon>
        <taxon>Staphylococcus</taxon>
    </lineage>
</organism>
<sequence>MALKKVLTIAGSDTSAGAGMQADLKTFQELDTYGMVALTAIVTMDKDTWSHDVTPLPMDVFEKQLETALSIGPDAIKTGMLGTEEIIKRAGEVYEASNAQYFVVDPVMVCKGEDEVLNPGNTEAMIKYLLPKATVVTPNLFEAGQLSGLGKLNSIEDMKKAATIIFDKGAQHVIIKGGKALDQDKSYDLYYDGQTFYQLTTDMFQQSYNHGAGCTFAAATTAYLANGKSPKEAVISAKAFVASAIKNGWKMNDFVGPVDHGAYNRIEHIDVEVTEV</sequence>
<name>PDXK_STAAC</name>
<comment type="function">
    <text evidence="1">Phosphorylates B6 vitamers; functions in a salvage pathway. Uses pyridoxal, pyridoxine, and pyridoxamine as substrates (By similarity).</text>
</comment>
<comment type="catalytic activity">
    <reaction>
        <text>pyridoxal + ATP = pyridoxal 5'-phosphate + ADP + H(+)</text>
        <dbReference type="Rhea" id="RHEA:10224"/>
        <dbReference type="ChEBI" id="CHEBI:15378"/>
        <dbReference type="ChEBI" id="CHEBI:17310"/>
        <dbReference type="ChEBI" id="CHEBI:30616"/>
        <dbReference type="ChEBI" id="CHEBI:456216"/>
        <dbReference type="ChEBI" id="CHEBI:597326"/>
        <dbReference type="EC" id="2.7.1.35"/>
    </reaction>
</comment>
<comment type="similarity">
    <text evidence="2">Belongs to the ThiD family.</text>
</comment>
<dbReference type="EC" id="2.7.1.35"/>
<dbReference type="EMBL" id="CP000046">
    <property type="protein sequence ID" value="AAW37735.1"/>
    <property type="molecule type" value="Genomic_DNA"/>
</dbReference>
<dbReference type="SMR" id="Q5HI96"/>
<dbReference type="KEGG" id="sac:SACOL0626"/>
<dbReference type="HOGENOM" id="CLU_020520_0_0_9"/>
<dbReference type="Proteomes" id="UP000000530">
    <property type="component" value="Chromosome"/>
</dbReference>
<dbReference type="GO" id="GO:0005829">
    <property type="term" value="C:cytosol"/>
    <property type="evidence" value="ECO:0007669"/>
    <property type="project" value="TreeGrafter"/>
</dbReference>
<dbReference type="GO" id="GO:0005524">
    <property type="term" value="F:ATP binding"/>
    <property type="evidence" value="ECO:0007669"/>
    <property type="project" value="UniProtKB-KW"/>
</dbReference>
<dbReference type="GO" id="GO:0008902">
    <property type="term" value="F:hydroxymethylpyrimidine kinase activity"/>
    <property type="evidence" value="ECO:0007669"/>
    <property type="project" value="TreeGrafter"/>
</dbReference>
<dbReference type="GO" id="GO:0046872">
    <property type="term" value="F:metal ion binding"/>
    <property type="evidence" value="ECO:0007669"/>
    <property type="project" value="UniProtKB-KW"/>
</dbReference>
<dbReference type="GO" id="GO:0008972">
    <property type="term" value="F:phosphomethylpyrimidine kinase activity"/>
    <property type="evidence" value="ECO:0007669"/>
    <property type="project" value="InterPro"/>
</dbReference>
<dbReference type="GO" id="GO:0008478">
    <property type="term" value="F:pyridoxal kinase activity"/>
    <property type="evidence" value="ECO:0007669"/>
    <property type="project" value="UniProtKB-EC"/>
</dbReference>
<dbReference type="GO" id="GO:0009228">
    <property type="term" value="P:thiamine biosynthetic process"/>
    <property type="evidence" value="ECO:0007669"/>
    <property type="project" value="InterPro"/>
</dbReference>
<dbReference type="CDD" id="cd01169">
    <property type="entry name" value="HMPP_kinase"/>
    <property type="match status" value="1"/>
</dbReference>
<dbReference type="FunFam" id="3.40.1190.20:FF:000003">
    <property type="entry name" value="Phosphomethylpyrimidine kinase ThiD"/>
    <property type="match status" value="1"/>
</dbReference>
<dbReference type="Gene3D" id="3.40.1190.20">
    <property type="match status" value="1"/>
</dbReference>
<dbReference type="InterPro" id="IPR004399">
    <property type="entry name" value="HMP/HMP-P_kinase_dom"/>
</dbReference>
<dbReference type="InterPro" id="IPR013749">
    <property type="entry name" value="PM/HMP-P_kinase-1"/>
</dbReference>
<dbReference type="InterPro" id="IPR029056">
    <property type="entry name" value="Ribokinase-like"/>
</dbReference>
<dbReference type="NCBIfam" id="TIGR00097">
    <property type="entry name" value="HMP-P_kinase"/>
    <property type="match status" value="1"/>
</dbReference>
<dbReference type="PANTHER" id="PTHR20858">
    <property type="entry name" value="PHOSPHOMETHYLPYRIMIDINE KINASE"/>
    <property type="match status" value="1"/>
</dbReference>
<dbReference type="PANTHER" id="PTHR20858:SF19">
    <property type="entry name" value="PYRIDOXINE KINASE"/>
    <property type="match status" value="1"/>
</dbReference>
<dbReference type="Pfam" id="PF08543">
    <property type="entry name" value="Phos_pyr_kin"/>
    <property type="match status" value="1"/>
</dbReference>
<dbReference type="SUPFAM" id="SSF53613">
    <property type="entry name" value="Ribokinase-like"/>
    <property type="match status" value="1"/>
</dbReference>
<evidence type="ECO:0000250" key="1"/>
<evidence type="ECO:0000305" key="2"/>
<keyword id="KW-0067">ATP-binding</keyword>
<keyword id="KW-0418">Kinase</keyword>
<keyword id="KW-0460">Magnesium</keyword>
<keyword id="KW-0479">Metal-binding</keyword>
<keyword id="KW-0547">Nucleotide-binding</keyword>
<keyword id="KW-0808">Transferase</keyword>
<accession>Q5HI96</accession>
<reference key="1">
    <citation type="journal article" date="2005" name="J. Bacteriol.">
        <title>Insights on evolution of virulence and resistance from the complete genome analysis of an early methicillin-resistant Staphylococcus aureus strain and a biofilm-producing methicillin-resistant Staphylococcus epidermidis strain.</title>
        <authorList>
            <person name="Gill S.R."/>
            <person name="Fouts D.E."/>
            <person name="Archer G.L."/>
            <person name="Mongodin E.F."/>
            <person name="DeBoy R.T."/>
            <person name="Ravel J."/>
            <person name="Paulsen I.T."/>
            <person name="Kolonay J.F."/>
            <person name="Brinkac L.M."/>
            <person name="Beanan M.J."/>
            <person name="Dodson R.J."/>
            <person name="Daugherty S.C."/>
            <person name="Madupu R."/>
            <person name="Angiuoli S.V."/>
            <person name="Durkin A.S."/>
            <person name="Haft D.H."/>
            <person name="Vamathevan J.J."/>
            <person name="Khouri H."/>
            <person name="Utterback T.R."/>
            <person name="Lee C."/>
            <person name="Dimitrov G."/>
            <person name="Jiang L."/>
            <person name="Qin H."/>
            <person name="Weidman J."/>
            <person name="Tran K."/>
            <person name="Kang K.H."/>
            <person name="Hance I.R."/>
            <person name="Nelson K.E."/>
            <person name="Fraser C.M."/>
        </authorList>
    </citation>
    <scope>NUCLEOTIDE SEQUENCE [LARGE SCALE GENOMIC DNA]</scope>
    <source>
        <strain>COL</strain>
    </source>
</reference>
<proteinExistence type="inferred from homology"/>
<protein>
    <recommendedName>
        <fullName>Putative pyridoxine kinase</fullName>
        <ecNumber>2.7.1.35</ecNumber>
    </recommendedName>
    <alternativeName>
        <fullName>PN/PL/PM kinase</fullName>
    </alternativeName>
    <alternativeName>
        <fullName>Pyridoxal kinase</fullName>
    </alternativeName>
    <alternativeName>
        <fullName>Pyridoxamine kinase</fullName>
    </alternativeName>
    <alternativeName>
        <fullName>Vitamin B6 kinase</fullName>
    </alternativeName>
</protein>